<name>Y738_METVS</name>
<dbReference type="EMBL" id="CP000742">
    <property type="protein sequence ID" value="ABR54644.1"/>
    <property type="molecule type" value="Genomic_DNA"/>
</dbReference>
<dbReference type="RefSeq" id="WP_011972546.1">
    <property type="nucleotide sequence ID" value="NC_009634.1"/>
</dbReference>
<dbReference type="SMR" id="A6UQ72"/>
<dbReference type="STRING" id="406327.Mevan_0738"/>
<dbReference type="GeneID" id="5325550"/>
<dbReference type="KEGG" id="mvn:Mevan_0738"/>
<dbReference type="eggNOG" id="arCOG04321">
    <property type="taxonomic scope" value="Archaea"/>
</dbReference>
<dbReference type="HOGENOM" id="CLU_048704_0_0_2"/>
<dbReference type="OrthoDB" id="21376at2157"/>
<dbReference type="Proteomes" id="UP000001107">
    <property type="component" value="Chromosome"/>
</dbReference>
<dbReference type="CDD" id="cd08025">
    <property type="entry name" value="RNR_PFL_like_DUF711"/>
    <property type="match status" value="1"/>
</dbReference>
<dbReference type="Gene3D" id="3.20.70.20">
    <property type="match status" value="1"/>
</dbReference>
<dbReference type="HAMAP" id="MF_01221">
    <property type="entry name" value="UPF0210"/>
    <property type="match status" value="1"/>
</dbReference>
<dbReference type="InterPro" id="IPR007841">
    <property type="entry name" value="UPF0210"/>
</dbReference>
<dbReference type="NCBIfam" id="NF003700">
    <property type="entry name" value="PRK05313.1"/>
    <property type="match status" value="1"/>
</dbReference>
<dbReference type="PANTHER" id="PTHR37560:SF1">
    <property type="entry name" value="UPF0210 PROTEIN MJ1665"/>
    <property type="match status" value="1"/>
</dbReference>
<dbReference type="PANTHER" id="PTHR37560">
    <property type="entry name" value="UPF0210 PROTEIN SPR0218"/>
    <property type="match status" value="1"/>
</dbReference>
<dbReference type="Pfam" id="PF05167">
    <property type="entry name" value="DUF711"/>
    <property type="match status" value="1"/>
</dbReference>
<dbReference type="SUPFAM" id="SSF51998">
    <property type="entry name" value="PFL-like glycyl radical enzymes"/>
    <property type="match status" value="1"/>
</dbReference>
<evidence type="ECO:0000255" key="1">
    <source>
        <dbReference type="HAMAP-Rule" id="MF_01221"/>
    </source>
</evidence>
<feature type="chain" id="PRO_1000066769" description="UPF0210 protein Mevan_0738">
    <location>
        <begin position="1"/>
        <end position="458"/>
    </location>
</feature>
<comment type="similarity">
    <text evidence="1">Belongs to the UPF0210 family.</text>
</comment>
<sequence length="458" mass="48325">MYVPEEIIETVRMIEYQHLDIRTTTLGVNLKDCADKDLDLLKENIYDKITSLGGNLVETAEKVSQKYGIPIVNKRISVTPIGLIIGSTLKGLNEEESVDACVEVGITLDKIAKDVGVDFIGGYSALVHKRATPEEKMLIRSIPKLMTKTDKVCASVNVATTKSGINMYAVKKMGEIIKETSECTKDAIGCAKIVVFCNAPEDNPFMAGAFHGPGEGDAVINAGVSGPGVVRAVVEKLKGKDIGTISEEIKKTAFKITRMGELVGREVANELNVDFGIVDLSLAPTPAPGDSIANILEAMGLERCGTHGTTAALALLNDAVKKGGAMASSYVGGLSGAFIPVSEDAGMIEAVEVGALNLSKLEAMTCVCSVGLDMIAIPGKTPASTVSAIIADEMAIGMINKKTTAVRLIPVPGKDVGEYVEYGGLLGTAPIMEVFEFSSEEFINRGGRIPAPIQSLTN</sequence>
<organism>
    <name type="scientific">Methanococcus vannielii (strain ATCC 35089 / DSM 1224 / JCM 13029 / OCM 148 / SB)</name>
    <dbReference type="NCBI Taxonomy" id="406327"/>
    <lineage>
        <taxon>Archaea</taxon>
        <taxon>Methanobacteriati</taxon>
        <taxon>Methanobacteriota</taxon>
        <taxon>Methanomada group</taxon>
        <taxon>Methanococci</taxon>
        <taxon>Methanococcales</taxon>
        <taxon>Methanococcaceae</taxon>
        <taxon>Methanococcus</taxon>
    </lineage>
</organism>
<accession>A6UQ72</accession>
<protein>
    <recommendedName>
        <fullName evidence="1">UPF0210 protein Mevan_0738</fullName>
    </recommendedName>
</protein>
<reference key="1">
    <citation type="submission" date="2007-06" db="EMBL/GenBank/DDBJ databases">
        <title>Complete sequence of Methanococcus vannielii SB.</title>
        <authorList>
            <consortium name="US DOE Joint Genome Institute"/>
            <person name="Copeland A."/>
            <person name="Lucas S."/>
            <person name="Lapidus A."/>
            <person name="Barry K."/>
            <person name="Glavina del Rio T."/>
            <person name="Dalin E."/>
            <person name="Tice H."/>
            <person name="Pitluck S."/>
            <person name="Chain P."/>
            <person name="Malfatti S."/>
            <person name="Shin M."/>
            <person name="Vergez L."/>
            <person name="Schmutz J."/>
            <person name="Larimer F."/>
            <person name="Land M."/>
            <person name="Hauser L."/>
            <person name="Kyrpides N."/>
            <person name="Anderson I."/>
            <person name="Sieprawska-Lupa M."/>
            <person name="Whitman W.B."/>
            <person name="Richardson P."/>
        </authorList>
    </citation>
    <scope>NUCLEOTIDE SEQUENCE [LARGE SCALE GENOMIC DNA]</scope>
    <source>
        <strain>ATCC 35089 / DSM 1224 / JCM 13029 / OCM 148 / SB</strain>
    </source>
</reference>
<gene>
    <name type="ordered locus">Mevan_0738</name>
</gene>
<proteinExistence type="inferred from homology"/>